<evidence type="ECO:0000250" key="1"/>
<evidence type="ECO:0000250" key="2">
    <source>
        <dbReference type="UniProtKB" id="P12814"/>
    </source>
</evidence>
<evidence type="ECO:0000250" key="3">
    <source>
        <dbReference type="UniProtKB" id="Q9Z1P2"/>
    </source>
</evidence>
<evidence type="ECO:0000255" key="4">
    <source>
        <dbReference type="PROSITE-ProRule" id="PRU00044"/>
    </source>
</evidence>
<evidence type="ECO:0000255" key="5">
    <source>
        <dbReference type="PROSITE-ProRule" id="PRU00448"/>
    </source>
</evidence>
<evidence type="ECO:0000269" key="6">
    <source>
    </source>
</evidence>
<evidence type="ECO:0000269" key="7">
    <source>
    </source>
</evidence>
<evidence type="ECO:0000269" key="8">
    <source>
    </source>
</evidence>
<evidence type="ECO:0000269" key="9">
    <source>
    </source>
</evidence>
<evidence type="ECO:0000305" key="10"/>
<evidence type="ECO:0007829" key="11">
    <source>
        <dbReference type="PDB" id="6C0A"/>
    </source>
</evidence>
<organism>
    <name type="scientific">Mus musculus</name>
    <name type="common">Mouse</name>
    <dbReference type="NCBI Taxonomy" id="10090"/>
    <lineage>
        <taxon>Eukaryota</taxon>
        <taxon>Metazoa</taxon>
        <taxon>Chordata</taxon>
        <taxon>Craniata</taxon>
        <taxon>Vertebrata</taxon>
        <taxon>Euteleostomi</taxon>
        <taxon>Mammalia</taxon>
        <taxon>Eutheria</taxon>
        <taxon>Euarchontoglires</taxon>
        <taxon>Glires</taxon>
        <taxon>Rodentia</taxon>
        <taxon>Myomorpha</taxon>
        <taxon>Muroidea</taxon>
        <taxon>Muridae</taxon>
        <taxon>Murinae</taxon>
        <taxon>Mus</taxon>
        <taxon>Mus</taxon>
    </lineage>
</organism>
<accession>Q7TPR4</accession>
<sequence length="892" mass="103068">MDHYDSQQTNDYMQPEEDWDRDLLLDPAWEKQQRKTFTAWCNSHLRKAGTQIENIEEDFRDGLKLMLLLEVISGERLAKPERGKMRVHKISNVNKALDFIASKGVKLVSIGAEEIVDGNVKMTLGMIWTIILRFAIQDISVEETSAKEGLLLWCQRKTAPYKNVNIQNFHISWKDGLGFCALIHRHRPELIDYGKLRKDDPLTNLNTAFDVAERFLDIPKMLDAEDIVGTARPDEKAIMTYVSSFYHAFSGAQKAETAANRICKVLAVNQENEQLMEDYEKLASDLLEWIRRTIPWLENRVPENTMHAMQQKLEDFRDYRRLHKPPKVQEKCQLEINFNTLQTKLRLSNRPAFMPSEGRMVSDINNAWGCLEQAEKGYEEWLLNEIRRLERLDHLAEKFRQKASIHEAWTDGKEAMLRQKDYETATLSEIKALLKKHEAFESDLAAHQDRVEQIAAIAQELNELDYYDSPSVNARCQKICDQWDNLGALTQKRREALERTEKLLETIDQLYLEYAKRAAPFNNWMEGAMEDLQDTFIVHTIEEIQGLTTAHEQFKATLPDADKERLAILGIHNEVSKIVQTYHVNMAGTNPYTTITPQEINGKWDHVRQLVPRRDQALTEEHARQQHNERLRKQFGAQANVIGPWIQTKMEEIGRISIEMHGTLEDQLSHLRQYEKSIVNYKPKIDQLECDHQLIQEALIFDNKHTNYNMEHIRVGWEQLLTTIARTINEVENQILTRDAKGISQEQMNEFRASFNHFDRDHSGTLGPEEFKACLISLGYDIGNDPQGEAEFARIMSIVDPNRLGVVTFQAFIDFMSRETADTDTADQVMASFKILAGDKNYITEDELRRELPPDQAEYCIARMAPYAGPDSVPGALDYMSFSTALYGESDL</sequence>
<feature type="chain" id="PRO_0000073432" description="Alpha-actinin-1">
    <location>
        <begin position="1"/>
        <end position="892"/>
    </location>
</feature>
<feature type="domain" description="Calponin-homology (CH) 1" evidence="4">
    <location>
        <begin position="31"/>
        <end position="135"/>
    </location>
</feature>
<feature type="domain" description="Calponin-homology (CH) 2" evidence="4">
    <location>
        <begin position="144"/>
        <end position="250"/>
    </location>
</feature>
<feature type="repeat" description="Spectrin 1">
    <location>
        <begin position="274"/>
        <end position="384"/>
    </location>
</feature>
<feature type="repeat" description="Spectrin 2">
    <location>
        <begin position="394"/>
        <end position="499"/>
    </location>
</feature>
<feature type="repeat" description="Spectrin 3">
    <location>
        <begin position="509"/>
        <end position="620"/>
    </location>
</feature>
<feature type="repeat" description="Spectrin 4">
    <location>
        <begin position="630"/>
        <end position="733"/>
    </location>
</feature>
<feature type="domain" description="EF-hand 1" evidence="5">
    <location>
        <begin position="746"/>
        <end position="781"/>
    </location>
</feature>
<feature type="domain" description="EF-hand 2" evidence="5">
    <location>
        <begin position="787"/>
        <end position="822"/>
    </location>
</feature>
<feature type="region of interest" description="Actin-binding">
    <location>
        <begin position="1"/>
        <end position="247"/>
    </location>
</feature>
<feature type="region of interest" description="Interaction with DDN" evidence="1">
    <location>
        <begin position="274"/>
        <end position="733"/>
    </location>
</feature>
<feature type="binding site" evidence="5">
    <location>
        <position position="759"/>
    </location>
    <ligand>
        <name>Ca(2+)</name>
        <dbReference type="ChEBI" id="CHEBI:29108"/>
    </ligand>
</feature>
<feature type="binding site" evidence="5">
    <location>
        <position position="761"/>
    </location>
    <ligand>
        <name>Ca(2+)</name>
        <dbReference type="ChEBI" id="CHEBI:29108"/>
    </ligand>
</feature>
<feature type="binding site" evidence="5">
    <location>
        <position position="763"/>
    </location>
    <ligand>
        <name>Ca(2+)</name>
        <dbReference type="ChEBI" id="CHEBI:29108"/>
    </ligand>
</feature>
<feature type="binding site" evidence="5">
    <location>
        <position position="765"/>
    </location>
    <ligand>
        <name>Ca(2+)</name>
        <dbReference type="ChEBI" id="CHEBI:29108"/>
    </ligand>
</feature>
<feature type="binding site" evidence="5">
    <location>
        <position position="770"/>
    </location>
    <ligand>
        <name>Ca(2+)</name>
        <dbReference type="ChEBI" id="CHEBI:29108"/>
    </ligand>
</feature>
<feature type="modified residue" description="N-acetylmethionine" evidence="2">
    <location>
        <position position="1"/>
    </location>
</feature>
<feature type="modified residue" description="Phosphoserine" evidence="2">
    <location>
        <position position="6"/>
    </location>
</feature>
<feature type="modified residue" description="Phosphotyrosine; by FAK1" evidence="2">
    <location>
        <position position="12"/>
    </location>
</feature>
<feature type="modified residue" description="N6-acetyllysine" evidence="2">
    <location>
        <position position="95"/>
    </location>
</feature>
<feature type="modified residue" description="N6-acetyllysine" evidence="2">
    <location>
        <position position="195"/>
    </location>
</feature>
<feature type="modified residue" description="Phosphoserine" evidence="2">
    <location>
        <position position="471"/>
    </location>
</feature>
<feature type="modified residue" description="N6-acetyllysine" evidence="2">
    <location>
        <position position="676"/>
    </location>
</feature>
<feature type="modified residue" description="Phosphoserine" evidence="2">
    <location>
        <position position="677"/>
    </location>
</feature>
<feature type="modified residue" description="Phosphoserine" evidence="3">
    <location>
        <position position="890"/>
    </location>
</feature>
<feature type="mutagenesis site" description="Shows less organization of the circumferential actin-filament network compared to controls." evidence="9">
    <original>Q</original>
    <variation>K</variation>
    <location>
        <position position="32"/>
    </location>
</feature>
<feature type="mutagenesis site" description="Shows less organization of the circumferential actin-filament network compared to controls." evidence="9">
    <original>V</original>
    <variation>I</variation>
    <location>
        <position position="105"/>
    </location>
</feature>
<feature type="helix" evidence="11">
    <location>
        <begin position="826"/>
        <end position="837"/>
    </location>
</feature>
<feature type="strand" evidence="11">
    <location>
        <begin position="841"/>
        <end position="844"/>
    </location>
</feature>
<feature type="helix" evidence="11">
    <location>
        <begin position="845"/>
        <end position="851"/>
    </location>
</feature>
<feature type="helix" evidence="11">
    <location>
        <begin position="854"/>
        <end position="863"/>
    </location>
</feature>
<feature type="strand" evidence="11">
    <location>
        <begin position="869"/>
        <end position="871"/>
    </location>
</feature>
<feature type="strand" evidence="11">
    <location>
        <begin position="876"/>
        <end position="879"/>
    </location>
</feature>
<feature type="helix" evidence="11">
    <location>
        <begin position="880"/>
        <end position="887"/>
    </location>
</feature>
<proteinExistence type="evidence at protein level"/>
<comment type="function">
    <text evidence="2">F-actin cross-linking protein which is thought to anchor actin to a variety of intracellular structures. Association with IGSF8 regulates the immune synapse formation and is required for efficient T-cell activation.</text>
</comment>
<comment type="subunit">
    <text evidence="2 3 7 8">Homodimer; antiparallel. Interacts with MYOZ2, TTID and LPP. Interacts with DDN (By similarity). Interacts with PSD (PubMed:17298598). Interacts with MICALL2 (PubMed:23100251). Interacts with DNM2 and CTTN. Interacts with PDLIM1. Interacts with PDLIM2. Interacts with PDLIM4 (via PDZ domain) (By similarity). Interacts with IGSF8 (By similarity).</text>
</comment>
<comment type="interaction">
    <interactant intactId="EBI-774010">
        <id>Q7TPR4</id>
    </interactant>
    <interactant intactId="EBI-6272972">
        <id>Q8K4E0</id>
        <label>Alms1</label>
    </interactant>
    <organismsDiffer>false</organismsDiffer>
    <experiments>4</experiments>
</comment>
<comment type="subcellular location">
    <subcellularLocation>
        <location evidence="8">Cytoplasm</location>
        <location evidence="8">Cytoskeleton</location>
    </subcellularLocation>
    <subcellularLocation>
        <location evidence="6">Cytoplasm</location>
        <location evidence="6">Myofibril</location>
        <location evidence="6">Sarcomere</location>
        <location evidence="6">Z line</location>
    </subcellularLocation>
    <subcellularLocation>
        <location evidence="2">Cell membrane</location>
    </subcellularLocation>
    <subcellularLocation>
        <location evidence="3">Cell junction</location>
    </subcellularLocation>
    <subcellularLocation>
        <location evidence="7">Cell projection</location>
        <location evidence="7">Ruffle</location>
    </subcellularLocation>
    <text evidence="6 7">Colocalizes with MYOZ2 and PPP3CA at the Z-line of heart and skeletal muscle (PubMed:11114196). Colocalizes with PSD in membrane ruffles and central reticular structures (PubMed:17298598).</text>
</comment>
<comment type="similarity">
    <text evidence="10">Belongs to the alpha-actinin family.</text>
</comment>
<gene>
    <name type="primary">Actn1</name>
</gene>
<reference key="1">
    <citation type="journal article" date="2004" name="Genome Res.">
        <title>The status, quality, and expansion of the NIH full-length cDNA project: the Mammalian Gene Collection (MGC).</title>
        <authorList>
            <consortium name="The MGC Project Team"/>
        </authorList>
    </citation>
    <scope>NUCLEOTIDE SEQUENCE [LARGE SCALE MRNA]</scope>
    <source>
        <tissue>Olfactory epithelium</tissue>
    </source>
</reference>
<reference key="2">
    <citation type="journal article" date="2000" name="Proc. Natl. Acad. Sci. U.S.A.">
        <title>Calsarcins, a novel family of sarcomeric calcineurin-binding proteins.</title>
        <authorList>
            <person name="Frey N."/>
            <person name="Richardson J.A."/>
            <person name="Olson E.N."/>
        </authorList>
    </citation>
    <scope>SUBCELLULAR LOCATION</scope>
</reference>
<reference key="3">
    <citation type="journal article" date="2007" name="Eur. J. Neurosci.">
        <title>Somatodendritic localization of EFA6A, a guanine nucleotide exchange factor for ADP-ribosylation factor 6, and its possible interaction with alpha-actinin in dendritic spines.</title>
        <authorList>
            <person name="Sakagami H."/>
            <person name="Honma T."/>
            <person name="Sukegawa J."/>
            <person name="Owada Y."/>
            <person name="Yanagisawa T."/>
            <person name="Kondo H."/>
        </authorList>
    </citation>
    <scope>INTERACTION WITH PSD</scope>
    <scope>SUBCELLULAR LOCATION</scope>
</reference>
<reference key="4">
    <citation type="journal article" date="2010" name="Cell">
        <title>A tissue-specific atlas of mouse protein phosphorylation and expression.</title>
        <authorList>
            <person name="Huttlin E.L."/>
            <person name="Jedrychowski M.P."/>
            <person name="Elias J.E."/>
            <person name="Goswami T."/>
            <person name="Rad R."/>
            <person name="Beausoleil S.A."/>
            <person name="Villen J."/>
            <person name="Haas W."/>
            <person name="Sowa M.E."/>
            <person name="Gygi S.P."/>
        </authorList>
    </citation>
    <scope>IDENTIFICATION BY MASS SPECTROMETRY [LARGE SCALE ANALYSIS]</scope>
    <source>
        <tissue>Brown adipose tissue</tissue>
        <tissue>Heart</tissue>
        <tissue>Kidney</tissue>
        <tissue>Liver</tissue>
        <tissue>Lung</tissue>
        <tissue>Pancreas</tissue>
        <tissue>Spleen</tissue>
        <tissue>Testis</tissue>
    </source>
</reference>
<reference key="5">
    <citation type="journal article" date="2012" name="J. Biol. Chem.">
        <title>Rab13 small G protein and junctional Rab13-binding protein (JRAB) orchestrate actin cytoskeletal organization during epithelial junctional development.</title>
        <authorList>
            <person name="Sakane A."/>
            <person name="Abdallah A.A."/>
            <person name="Nakano K."/>
            <person name="Honda K."/>
            <person name="Ikeda W."/>
            <person name="Nishikawa Y."/>
            <person name="Matsumoto M."/>
            <person name="Matsushita N."/>
            <person name="Kitamura T."/>
            <person name="Sasaki T."/>
        </authorList>
    </citation>
    <scope>INTERACTION WITH MICALL2</scope>
    <scope>SUBCELLULAR LOCATION</scope>
</reference>
<reference key="6">
    <citation type="journal article" date="2013" name="Am. J. Hum. Genet.">
        <title>ACTN1 mutations cause congenital macrothrombocytopenia.</title>
        <authorList>
            <person name="Kunishima S."/>
            <person name="Okuno Y."/>
            <person name="Yoshida K."/>
            <person name="Shiraishi Y."/>
            <person name="Sanada M."/>
            <person name="Muramatsu H."/>
            <person name="Chiba K."/>
            <person name="Tanaka H."/>
            <person name="Miyazaki K."/>
            <person name="Sakai M."/>
            <person name="Ohtake M."/>
            <person name="Kobayashi R."/>
            <person name="Iguchi A."/>
            <person name="Niimi G."/>
            <person name="Otsu M."/>
            <person name="Takahashi Y."/>
            <person name="Miyano S."/>
            <person name="Saito H."/>
            <person name="Kojima S."/>
            <person name="Ogawa S."/>
        </authorList>
    </citation>
    <scope>MUTAGENESIS OF GLN-32 AND VAL-105</scope>
</reference>
<keyword id="KW-0002">3D-structure</keyword>
<keyword id="KW-0007">Acetylation</keyword>
<keyword id="KW-0009">Actin-binding</keyword>
<keyword id="KW-0106">Calcium</keyword>
<keyword id="KW-0965">Cell junction</keyword>
<keyword id="KW-1003">Cell membrane</keyword>
<keyword id="KW-0966">Cell projection</keyword>
<keyword id="KW-0963">Cytoplasm</keyword>
<keyword id="KW-0206">Cytoskeleton</keyword>
<keyword id="KW-0472">Membrane</keyword>
<keyword id="KW-0479">Metal-binding</keyword>
<keyword id="KW-0597">Phosphoprotein</keyword>
<keyword id="KW-1185">Reference proteome</keyword>
<keyword id="KW-0677">Repeat</keyword>
<name>ACTN1_MOUSE</name>
<dbReference type="EMBL" id="BC054830">
    <property type="protein sequence ID" value="AAH54830.1"/>
    <property type="molecule type" value="mRNA"/>
</dbReference>
<dbReference type="CCDS" id="CCDS26011.1"/>
<dbReference type="RefSeq" id="NP_598917.1">
    <property type="nucleotide sequence ID" value="NM_134156.3"/>
</dbReference>
<dbReference type="PDB" id="6C0A">
    <property type="method" value="NMR"/>
    <property type="chains" value="A=822-892"/>
</dbReference>
<dbReference type="PDBsum" id="6C0A"/>
<dbReference type="SMR" id="Q7TPR4"/>
<dbReference type="BioGRID" id="224977">
    <property type="interactions" value="40"/>
</dbReference>
<dbReference type="CORUM" id="Q7TPR4"/>
<dbReference type="FunCoup" id="Q7TPR4">
    <property type="interactions" value="1518"/>
</dbReference>
<dbReference type="IntAct" id="Q7TPR4">
    <property type="interactions" value="19"/>
</dbReference>
<dbReference type="MINT" id="Q7TPR4"/>
<dbReference type="STRING" id="10090.ENSMUSP00000021554"/>
<dbReference type="CarbonylDB" id="Q7TPR4"/>
<dbReference type="GlyGen" id="Q7TPR4">
    <property type="glycosylation" value="1 site, 1 O-linked glycan (1 site)"/>
</dbReference>
<dbReference type="iPTMnet" id="Q7TPR4"/>
<dbReference type="PhosphoSitePlus" id="Q7TPR4"/>
<dbReference type="SwissPalm" id="Q7TPR4"/>
<dbReference type="CPTAC" id="non-CPTAC-3764"/>
<dbReference type="jPOST" id="Q7TPR4"/>
<dbReference type="PaxDb" id="10090-ENSMUSP00000021554"/>
<dbReference type="PeptideAtlas" id="Q7TPR4"/>
<dbReference type="ProteomicsDB" id="285718"/>
<dbReference type="Pumba" id="Q7TPR4"/>
<dbReference type="Antibodypedia" id="51">
    <property type="antibodies" value="474 antibodies from 39 providers"/>
</dbReference>
<dbReference type="DNASU" id="109711"/>
<dbReference type="Ensembl" id="ENSMUST00000021554.16">
    <property type="protein sequence ID" value="ENSMUSP00000021554.9"/>
    <property type="gene ID" value="ENSMUSG00000015143.16"/>
</dbReference>
<dbReference type="GeneID" id="109711"/>
<dbReference type="KEGG" id="mmu:109711"/>
<dbReference type="UCSC" id="uc007oap.2">
    <property type="organism name" value="mouse"/>
</dbReference>
<dbReference type="AGR" id="MGI:2137706"/>
<dbReference type="CTD" id="87"/>
<dbReference type="MGI" id="MGI:2137706">
    <property type="gene designation" value="Actn1"/>
</dbReference>
<dbReference type="VEuPathDB" id="HostDB:ENSMUSG00000015143"/>
<dbReference type="eggNOG" id="KOG0035">
    <property type="taxonomic scope" value="Eukaryota"/>
</dbReference>
<dbReference type="GeneTree" id="ENSGT00940000155548"/>
<dbReference type="InParanoid" id="Q7TPR4"/>
<dbReference type="OMA" id="QQRWITV"/>
<dbReference type="OrthoDB" id="10017054at2759"/>
<dbReference type="PhylomeDB" id="Q7TPR4"/>
<dbReference type="TreeFam" id="TF352676"/>
<dbReference type="Reactome" id="R-MMU-114608">
    <property type="pathway name" value="Platelet degranulation"/>
</dbReference>
<dbReference type="Reactome" id="R-MMU-446388">
    <property type="pathway name" value="Regulation of cytoskeletal remodeling and cell spreading by IPP complex components"/>
</dbReference>
<dbReference type="Reactome" id="R-MMU-9013405">
    <property type="pathway name" value="RHOD GTPase cycle"/>
</dbReference>
<dbReference type="Reactome" id="R-MMU-9013418">
    <property type="pathway name" value="RHOBTB2 GTPase cycle"/>
</dbReference>
<dbReference type="Reactome" id="R-MMU-9035034">
    <property type="pathway name" value="RHOF GTPase cycle"/>
</dbReference>
<dbReference type="BioGRID-ORCS" id="109711">
    <property type="hits" value="3 hits in 80 CRISPR screens"/>
</dbReference>
<dbReference type="CD-CODE" id="CE726F99">
    <property type="entry name" value="Postsynaptic density"/>
</dbReference>
<dbReference type="ChiTaRS" id="Actn1">
    <property type="organism name" value="mouse"/>
</dbReference>
<dbReference type="PRO" id="PR:Q7TPR4"/>
<dbReference type="Proteomes" id="UP000000589">
    <property type="component" value="Chromosome 12"/>
</dbReference>
<dbReference type="RNAct" id="Q7TPR4">
    <property type="molecule type" value="protein"/>
</dbReference>
<dbReference type="Bgee" id="ENSMUSG00000015143">
    <property type="expression patterns" value="Expressed in vestibular membrane of cochlear duct and 263 other cell types or tissues"/>
</dbReference>
<dbReference type="ExpressionAtlas" id="Q7TPR4">
    <property type="expression patterns" value="baseline and differential"/>
</dbReference>
<dbReference type="GO" id="GO:0005884">
    <property type="term" value="C:actin filament"/>
    <property type="evidence" value="ECO:0007669"/>
    <property type="project" value="Ensembl"/>
</dbReference>
<dbReference type="GO" id="GO:0005903">
    <property type="term" value="C:brush border"/>
    <property type="evidence" value="ECO:0000314"/>
    <property type="project" value="UniProtKB"/>
</dbReference>
<dbReference type="GO" id="GO:0030863">
    <property type="term" value="C:cortical cytoskeleton"/>
    <property type="evidence" value="ECO:0000304"/>
    <property type="project" value="UniProtKB"/>
</dbReference>
<dbReference type="GO" id="GO:0032127">
    <property type="term" value="C:dense core granule membrane"/>
    <property type="evidence" value="ECO:0000304"/>
    <property type="project" value="UniProtKB"/>
</dbReference>
<dbReference type="GO" id="GO:0005916">
    <property type="term" value="C:fascia adherens"/>
    <property type="evidence" value="ECO:0000314"/>
    <property type="project" value="MGI"/>
</dbReference>
<dbReference type="GO" id="GO:0005925">
    <property type="term" value="C:focal adhesion"/>
    <property type="evidence" value="ECO:0000304"/>
    <property type="project" value="UniProtKB"/>
</dbReference>
<dbReference type="GO" id="GO:0098978">
    <property type="term" value="C:glutamatergic synapse"/>
    <property type="evidence" value="ECO:0007669"/>
    <property type="project" value="Ensembl"/>
</dbReference>
<dbReference type="GO" id="GO:0005886">
    <property type="term" value="C:plasma membrane"/>
    <property type="evidence" value="ECO:0007669"/>
    <property type="project" value="UniProtKB-SubCell"/>
</dbReference>
<dbReference type="GO" id="GO:0001726">
    <property type="term" value="C:ruffle"/>
    <property type="evidence" value="ECO:0000314"/>
    <property type="project" value="UniProtKB"/>
</dbReference>
<dbReference type="GO" id="GO:0030017">
    <property type="term" value="C:sarcomere"/>
    <property type="evidence" value="ECO:0000314"/>
    <property type="project" value="MGI"/>
</dbReference>
<dbReference type="GO" id="GO:0030141">
    <property type="term" value="C:secretory granule"/>
    <property type="evidence" value="ECO:0000303"/>
    <property type="project" value="UniProtKB"/>
</dbReference>
<dbReference type="GO" id="GO:0001725">
    <property type="term" value="C:stress fiber"/>
    <property type="evidence" value="ECO:0000304"/>
    <property type="project" value="UniProtKB"/>
</dbReference>
<dbReference type="GO" id="GO:0030018">
    <property type="term" value="C:Z disc"/>
    <property type="evidence" value="ECO:0000314"/>
    <property type="project" value="MGI"/>
</dbReference>
<dbReference type="GO" id="GO:0051015">
    <property type="term" value="F:actin filament binding"/>
    <property type="evidence" value="ECO:0000314"/>
    <property type="project" value="UniProtKB"/>
</dbReference>
<dbReference type="GO" id="GO:0005509">
    <property type="term" value="F:calcium ion binding"/>
    <property type="evidence" value="ECO:0007669"/>
    <property type="project" value="InterPro"/>
</dbReference>
<dbReference type="GO" id="GO:0003725">
    <property type="term" value="F:double-stranded RNA binding"/>
    <property type="evidence" value="ECO:0000266"/>
    <property type="project" value="MGI"/>
</dbReference>
<dbReference type="GO" id="GO:0005178">
    <property type="term" value="F:integrin binding"/>
    <property type="evidence" value="ECO:0000353"/>
    <property type="project" value="UniProtKB"/>
</dbReference>
<dbReference type="GO" id="GO:0042803">
    <property type="term" value="F:protein homodimerization activity"/>
    <property type="evidence" value="ECO:0000314"/>
    <property type="project" value="UniProtKB"/>
</dbReference>
<dbReference type="GO" id="GO:0099186">
    <property type="term" value="F:structural constituent of postsynapse"/>
    <property type="evidence" value="ECO:0007669"/>
    <property type="project" value="Ensembl"/>
</dbReference>
<dbReference type="GO" id="GO:0003713">
    <property type="term" value="F:transcription coactivator activity"/>
    <property type="evidence" value="ECO:0007669"/>
    <property type="project" value="Ensembl"/>
</dbReference>
<dbReference type="GO" id="GO:0044325">
    <property type="term" value="F:transmembrane transporter binding"/>
    <property type="evidence" value="ECO:0007669"/>
    <property type="project" value="Ensembl"/>
</dbReference>
<dbReference type="GO" id="GO:0017166">
    <property type="term" value="F:vinculin binding"/>
    <property type="evidence" value="ECO:0000314"/>
    <property type="project" value="UniProtKB"/>
</dbReference>
<dbReference type="GO" id="GO:0051017">
    <property type="term" value="P:actin filament bundle assembly"/>
    <property type="evidence" value="ECO:0000314"/>
    <property type="project" value="UniProtKB"/>
</dbReference>
<dbReference type="GO" id="GO:0051639">
    <property type="term" value="P:actin filament network formation"/>
    <property type="evidence" value="ECO:0007669"/>
    <property type="project" value="Ensembl"/>
</dbReference>
<dbReference type="GO" id="GO:0030865">
    <property type="term" value="P:cortical cytoskeleton organization"/>
    <property type="evidence" value="ECO:0000304"/>
    <property type="project" value="UniProtKB"/>
</dbReference>
<dbReference type="GO" id="GO:0048041">
    <property type="term" value="P:focal adhesion assembly"/>
    <property type="evidence" value="ECO:0007669"/>
    <property type="project" value="Ensembl"/>
</dbReference>
<dbReference type="GO" id="GO:0030220">
    <property type="term" value="P:platelet formation"/>
    <property type="evidence" value="ECO:0007669"/>
    <property type="project" value="Ensembl"/>
</dbReference>
<dbReference type="CDD" id="cd21214">
    <property type="entry name" value="CH_ACTN_rpt1"/>
    <property type="match status" value="1"/>
</dbReference>
<dbReference type="CDD" id="cd21216">
    <property type="entry name" value="CH_ACTN_rpt2"/>
    <property type="match status" value="1"/>
</dbReference>
<dbReference type="CDD" id="cd00051">
    <property type="entry name" value="EFh"/>
    <property type="match status" value="1"/>
</dbReference>
<dbReference type="CDD" id="cd00176">
    <property type="entry name" value="SPEC"/>
    <property type="match status" value="2"/>
</dbReference>
<dbReference type="FunFam" id="1.10.238.10:FF:000004">
    <property type="entry name" value="Actinin alpha 1"/>
    <property type="match status" value="1"/>
</dbReference>
<dbReference type="FunFam" id="1.10.418.10:FF:000001">
    <property type="entry name" value="Actinin alpha 1"/>
    <property type="match status" value="1"/>
</dbReference>
<dbReference type="FunFam" id="1.20.58.60:FF:000004">
    <property type="entry name" value="Actinin alpha 1"/>
    <property type="match status" value="1"/>
</dbReference>
<dbReference type="FunFam" id="1.20.58.60:FF:000005">
    <property type="entry name" value="Actinin alpha 1"/>
    <property type="match status" value="1"/>
</dbReference>
<dbReference type="FunFam" id="1.10.418.10:FF:000005">
    <property type="entry name" value="Actinin alpha 4"/>
    <property type="match status" value="1"/>
</dbReference>
<dbReference type="FunFam" id="1.10.238.10:FF:000018">
    <property type="entry name" value="Actinin, alpha 1"/>
    <property type="match status" value="1"/>
</dbReference>
<dbReference type="FunFam" id="1.20.58.60:FF:000002">
    <property type="entry name" value="Actinin, alpha 1"/>
    <property type="match status" value="1"/>
</dbReference>
<dbReference type="FunFam" id="1.20.58.60:FF:000003">
    <property type="entry name" value="Actinin, alpha 1"/>
    <property type="match status" value="1"/>
</dbReference>
<dbReference type="Gene3D" id="1.20.58.60">
    <property type="match status" value="4"/>
</dbReference>
<dbReference type="Gene3D" id="1.10.418.10">
    <property type="entry name" value="Calponin-like domain"/>
    <property type="match status" value="2"/>
</dbReference>
<dbReference type="Gene3D" id="1.10.238.10">
    <property type="entry name" value="EF-hand"/>
    <property type="match status" value="2"/>
</dbReference>
<dbReference type="InterPro" id="IPR001589">
    <property type="entry name" value="Actinin_actin-bd_CS"/>
</dbReference>
<dbReference type="InterPro" id="IPR001715">
    <property type="entry name" value="CH_dom"/>
</dbReference>
<dbReference type="InterPro" id="IPR036872">
    <property type="entry name" value="CH_dom_sf"/>
</dbReference>
<dbReference type="InterPro" id="IPR011992">
    <property type="entry name" value="EF-hand-dom_pair"/>
</dbReference>
<dbReference type="InterPro" id="IPR014837">
    <property type="entry name" value="EF-hand_Ca_insen"/>
</dbReference>
<dbReference type="InterPro" id="IPR018247">
    <property type="entry name" value="EF_Hand_1_Ca_BS"/>
</dbReference>
<dbReference type="InterPro" id="IPR002048">
    <property type="entry name" value="EF_hand_dom"/>
</dbReference>
<dbReference type="InterPro" id="IPR018159">
    <property type="entry name" value="Spectrin/alpha-actinin"/>
</dbReference>
<dbReference type="InterPro" id="IPR002017">
    <property type="entry name" value="Spectrin_repeat"/>
</dbReference>
<dbReference type="PANTHER" id="PTHR11915">
    <property type="entry name" value="SPECTRIN/FILAMIN RELATED CYTOSKELETAL PROTEIN"/>
    <property type="match status" value="1"/>
</dbReference>
<dbReference type="Pfam" id="PF00307">
    <property type="entry name" value="CH"/>
    <property type="match status" value="2"/>
</dbReference>
<dbReference type="Pfam" id="PF13405">
    <property type="entry name" value="EF-hand_6"/>
    <property type="match status" value="1"/>
</dbReference>
<dbReference type="Pfam" id="PF08726">
    <property type="entry name" value="EFhand_Ca_insen"/>
    <property type="match status" value="1"/>
</dbReference>
<dbReference type="Pfam" id="PF00435">
    <property type="entry name" value="Spectrin"/>
    <property type="match status" value="4"/>
</dbReference>
<dbReference type="SMART" id="SM00033">
    <property type="entry name" value="CH"/>
    <property type="match status" value="2"/>
</dbReference>
<dbReference type="SMART" id="SM00054">
    <property type="entry name" value="EFh"/>
    <property type="match status" value="2"/>
</dbReference>
<dbReference type="SMART" id="SM01184">
    <property type="entry name" value="efhand_Ca_insen"/>
    <property type="match status" value="1"/>
</dbReference>
<dbReference type="SMART" id="SM00150">
    <property type="entry name" value="SPEC"/>
    <property type="match status" value="2"/>
</dbReference>
<dbReference type="SUPFAM" id="SSF47576">
    <property type="entry name" value="Calponin-homology domain, CH-domain"/>
    <property type="match status" value="1"/>
</dbReference>
<dbReference type="SUPFAM" id="SSF47473">
    <property type="entry name" value="EF-hand"/>
    <property type="match status" value="1"/>
</dbReference>
<dbReference type="SUPFAM" id="SSF46966">
    <property type="entry name" value="Spectrin repeat"/>
    <property type="match status" value="4"/>
</dbReference>
<dbReference type="PROSITE" id="PS00019">
    <property type="entry name" value="ACTININ_1"/>
    <property type="match status" value="1"/>
</dbReference>
<dbReference type="PROSITE" id="PS00020">
    <property type="entry name" value="ACTININ_2"/>
    <property type="match status" value="1"/>
</dbReference>
<dbReference type="PROSITE" id="PS50021">
    <property type="entry name" value="CH"/>
    <property type="match status" value="2"/>
</dbReference>
<dbReference type="PROSITE" id="PS00018">
    <property type="entry name" value="EF_HAND_1"/>
    <property type="match status" value="1"/>
</dbReference>
<dbReference type="PROSITE" id="PS50222">
    <property type="entry name" value="EF_HAND_2"/>
    <property type="match status" value="2"/>
</dbReference>
<protein>
    <recommendedName>
        <fullName>Alpha-actinin-1</fullName>
    </recommendedName>
    <alternativeName>
        <fullName>Alpha-actinin cytoskeletal isoform</fullName>
    </alternativeName>
    <alternativeName>
        <fullName>F-actin cross-linking protein</fullName>
    </alternativeName>
    <alternativeName>
        <fullName>Non-muscle alpha-actinin-1</fullName>
    </alternativeName>
</protein>